<dbReference type="EMBL" id="U00089">
    <property type="protein sequence ID" value="AAG34758.1"/>
    <property type="molecule type" value="Genomic_DNA"/>
</dbReference>
<dbReference type="RefSeq" id="NP_109942.1">
    <property type="nucleotide sequence ID" value="NC_000912.1"/>
</dbReference>
<dbReference type="RefSeq" id="WP_010874611.1">
    <property type="nucleotide sequence ID" value="NZ_OU342337.1"/>
</dbReference>
<dbReference type="SMR" id="Q9EXC9"/>
<dbReference type="IntAct" id="Q9EXC9">
    <property type="interactions" value="1"/>
</dbReference>
<dbReference type="STRING" id="272634.MPN_254"/>
<dbReference type="EnsemblBacteria" id="AAG34758">
    <property type="protein sequence ID" value="AAG34758"/>
    <property type="gene ID" value="MPN_254"/>
</dbReference>
<dbReference type="KEGG" id="mpn:MPN_254"/>
<dbReference type="PATRIC" id="fig|272634.6.peg.273"/>
<dbReference type="HOGENOM" id="CLU_030805_1_2_14"/>
<dbReference type="OrthoDB" id="399376at2"/>
<dbReference type="BioCyc" id="MPNE272634:G1GJ3-401-MONOMER"/>
<dbReference type="Proteomes" id="UP000000808">
    <property type="component" value="Chromosome"/>
</dbReference>
<dbReference type="Gene3D" id="3.90.950.20">
    <property type="entry name" value="CinA-like"/>
    <property type="match status" value="1"/>
</dbReference>
<dbReference type="InterPro" id="IPR036653">
    <property type="entry name" value="CinA-like_C"/>
</dbReference>
<dbReference type="InterPro" id="IPR008136">
    <property type="entry name" value="CinA_C"/>
</dbReference>
<dbReference type="NCBIfam" id="TIGR00199">
    <property type="entry name" value="PncC_domain"/>
    <property type="match status" value="1"/>
</dbReference>
<dbReference type="Pfam" id="PF02464">
    <property type="entry name" value="CinA"/>
    <property type="match status" value="1"/>
</dbReference>
<dbReference type="SUPFAM" id="SSF142433">
    <property type="entry name" value="CinA-like"/>
    <property type="match status" value="1"/>
</dbReference>
<accession>Q9EXC9</accession>
<reference key="1">
    <citation type="journal article" date="1996" name="Nucleic Acids Res.">
        <title>Complete sequence analysis of the genome of the bacterium Mycoplasma pneumoniae.</title>
        <authorList>
            <person name="Himmelreich R."/>
            <person name="Hilbert H."/>
            <person name="Plagens H."/>
            <person name="Pirkl E."/>
            <person name="Li B.-C."/>
            <person name="Herrmann R."/>
        </authorList>
    </citation>
    <scope>NUCLEOTIDE SEQUENCE [LARGE SCALE GENOMIC DNA]</scope>
    <source>
        <strain>ATCC 29342 / M129 / Subtype 1</strain>
    </source>
</reference>
<reference key="2">
    <citation type="journal article" date="2000" name="Nucleic Acids Res.">
        <title>Re-annotating the Mycoplasma pneumoniae genome sequence: adding value, function and reading frames.</title>
        <authorList>
            <person name="Dandekar T."/>
            <person name="Huynen M."/>
            <person name="Regula J.T."/>
            <person name="Ueberle B."/>
            <person name="Zimmermann C.U."/>
            <person name="Andrade M.A."/>
            <person name="Doerks T."/>
            <person name="Sanchez-Pulido L."/>
            <person name="Snel B."/>
            <person name="Suyama M."/>
            <person name="Yuan Y.P."/>
            <person name="Herrmann R."/>
            <person name="Bork P."/>
        </authorList>
    </citation>
    <scope>IDENTIFICATION</scope>
    <source>
        <strain>ATCC 29342 / M129 / Subtype 1</strain>
    </source>
</reference>
<reference key="3">
    <citation type="journal article" date="2000" name="Electrophoresis">
        <title>Towards a two-dimensional proteome map of Mycoplasma pneumoniae.</title>
        <authorList>
            <person name="Regula J.T."/>
            <person name="Ueberle B."/>
            <person name="Boguth G."/>
            <person name="Goerg A."/>
            <person name="Schnoelzer M."/>
            <person name="Herrmann R."/>
            <person name="Frank R."/>
        </authorList>
    </citation>
    <scope>IDENTIFICATION BY MASS SPECTROMETRY</scope>
    <source>
        <strain>ATCC 29342 / M129 / Subtype 1</strain>
    </source>
</reference>
<comment type="similarity">
    <text evidence="1">Belongs to the CinA family.</text>
</comment>
<proteinExistence type="evidence at protein level"/>
<sequence length="157" mass="16959">MYARLIAEKLLNHKLTIATAESVTGGLLSSSLTDIAGASRFFKGAIVAYSNELKKSLLNVKQSTLINHGAVSRYCVREMALGLMQKLNVDIAVACSGVAGPDALENQAVGSLFFCVIVANKAYDFETKLPAGSRNELRQLFVQKILQTVEHILSEIS</sequence>
<gene>
    <name type="ordered locus">MPN_254</name>
    <name type="ORF">A65_orf157</name>
    <name type="ORF">MP578.1</name>
</gene>
<feature type="chain" id="PRO_0000156789" description="Protein MG115 homolog">
    <location>
        <begin position="1"/>
        <end position="157"/>
    </location>
</feature>
<name>Y254_MYCPN</name>
<organism>
    <name type="scientific">Mycoplasma pneumoniae (strain ATCC 29342 / M129 / Subtype 1)</name>
    <name type="common">Mycoplasmoides pneumoniae</name>
    <dbReference type="NCBI Taxonomy" id="272634"/>
    <lineage>
        <taxon>Bacteria</taxon>
        <taxon>Bacillati</taxon>
        <taxon>Mycoplasmatota</taxon>
        <taxon>Mycoplasmoidales</taxon>
        <taxon>Mycoplasmoidaceae</taxon>
        <taxon>Mycoplasmoides</taxon>
    </lineage>
</organism>
<evidence type="ECO:0000305" key="1"/>
<protein>
    <recommendedName>
        <fullName>Protein MG115 homolog</fullName>
    </recommendedName>
</protein>
<keyword id="KW-1185">Reference proteome</keyword>